<feature type="chain" id="PRO_0000374230" description="tRNA-2-methylthio-N(6)-dimethylallyladenosine synthase">
    <location>
        <begin position="1"/>
        <end position="447"/>
    </location>
</feature>
<feature type="domain" description="MTTase N-terminal" evidence="1">
    <location>
        <begin position="10"/>
        <end position="128"/>
    </location>
</feature>
<feature type="domain" description="Radical SAM core" evidence="2">
    <location>
        <begin position="151"/>
        <end position="382"/>
    </location>
</feature>
<feature type="domain" description="TRAM" evidence="1">
    <location>
        <begin position="384"/>
        <end position="447"/>
    </location>
</feature>
<feature type="binding site" evidence="1">
    <location>
        <position position="19"/>
    </location>
    <ligand>
        <name>[4Fe-4S] cluster</name>
        <dbReference type="ChEBI" id="CHEBI:49883"/>
        <label>1</label>
    </ligand>
</feature>
<feature type="binding site" evidence="1">
    <location>
        <position position="55"/>
    </location>
    <ligand>
        <name>[4Fe-4S] cluster</name>
        <dbReference type="ChEBI" id="CHEBI:49883"/>
        <label>1</label>
    </ligand>
</feature>
<feature type="binding site" evidence="1">
    <location>
        <position position="89"/>
    </location>
    <ligand>
        <name>[4Fe-4S] cluster</name>
        <dbReference type="ChEBI" id="CHEBI:49883"/>
        <label>1</label>
    </ligand>
</feature>
<feature type="binding site" evidence="1">
    <location>
        <position position="165"/>
    </location>
    <ligand>
        <name>[4Fe-4S] cluster</name>
        <dbReference type="ChEBI" id="CHEBI:49883"/>
        <label>2</label>
        <note>4Fe-4S-S-AdoMet</note>
    </ligand>
</feature>
<feature type="binding site" evidence="1">
    <location>
        <position position="169"/>
    </location>
    <ligand>
        <name>[4Fe-4S] cluster</name>
        <dbReference type="ChEBI" id="CHEBI:49883"/>
        <label>2</label>
        <note>4Fe-4S-S-AdoMet</note>
    </ligand>
</feature>
<feature type="binding site" evidence="1">
    <location>
        <position position="172"/>
    </location>
    <ligand>
        <name>[4Fe-4S] cluster</name>
        <dbReference type="ChEBI" id="CHEBI:49883"/>
        <label>2</label>
        <note>4Fe-4S-S-AdoMet</note>
    </ligand>
</feature>
<evidence type="ECO:0000255" key="1">
    <source>
        <dbReference type="HAMAP-Rule" id="MF_01864"/>
    </source>
</evidence>
<evidence type="ECO:0000255" key="2">
    <source>
        <dbReference type="PROSITE-ProRule" id="PRU01266"/>
    </source>
</evidence>
<comment type="function">
    <text evidence="1">Catalyzes the methylthiolation of N6-(dimethylallyl)adenosine (i(6)A), leading to the formation of 2-methylthio-N6-(dimethylallyl)adenosine (ms(2)i(6)A) at position 37 in tRNAs that read codons beginning with uridine.</text>
</comment>
<comment type="catalytic activity">
    <reaction evidence="1">
        <text>N(6)-dimethylallyladenosine(37) in tRNA + (sulfur carrier)-SH + AH2 + 2 S-adenosyl-L-methionine = 2-methylsulfanyl-N(6)-dimethylallyladenosine(37) in tRNA + (sulfur carrier)-H + 5'-deoxyadenosine + L-methionine + A + S-adenosyl-L-homocysteine + 2 H(+)</text>
        <dbReference type="Rhea" id="RHEA:37067"/>
        <dbReference type="Rhea" id="RHEA-COMP:10375"/>
        <dbReference type="Rhea" id="RHEA-COMP:10376"/>
        <dbReference type="Rhea" id="RHEA-COMP:14737"/>
        <dbReference type="Rhea" id="RHEA-COMP:14739"/>
        <dbReference type="ChEBI" id="CHEBI:13193"/>
        <dbReference type="ChEBI" id="CHEBI:15378"/>
        <dbReference type="ChEBI" id="CHEBI:17319"/>
        <dbReference type="ChEBI" id="CHEBI:17499"/>
        <dbReference type="ChEBI" id="CHEBI:29917"/>
        <dbReference type="ChEBI" id="CHEBI:57844"/>
        <dbReference type="ChEBI" id="CHEBI:57856"/>
        <dbReference type="ChEBI" id="CHEBI:59789"/>
        <dbReference type="ChEBI" id="CHEBI:64428"/>
        <dbReference type="ChEBI" id="CHEBI:74415"/>
        <dbReference type="ChEBI" id="CHEBI:74417"/>
        <dbReference type="EC" id="2.8.4.3"/>
    </reaction>
</comment>
<comment type="cofactor">
    <cofactor evidence="1">
        <name>[4Fe-4S] cluster</name>
        <dbReference type="ChEBI" id="CHEBI:49883"/>
    </cofactor>
    <text evidence="1">Binds 2 [4Fe-4S] clusters. One cluster is coordinated with 3 cysteines and an exchangeable S-adenosyl-L-methionine.</text>
</comment>
<comment type="subunit">
    <text evidence="1">Monomer.</text>
</comment>
<comment type="subcellular location">
    <subcellularLocation>
        <location evidence="1">Cytoplasm</location>
    </subcellularLocation>
</comment>
<comment type="similarity">
    <text evidence="1">Belongs to the methylthiotransferase family. MiaB subfamily.</text>
</comment>
<accession>Q8XLE9</accession>
<proteinExistence type="inferred from homology"/>
<reference key="1">
    <citation type="journal article" date="2002" name="Proc. Natl. Acad. Sci. U.S.A.">
        <title>Complete genome sequence of Clostridium perfringens, an anaerobic flesh-eater.</title>
        <authorList>
            <person name="Shimizu T."/>
            <person name="Ohtani K."/>
            <person name="Hirakawa H."/>
            <person name="Ohshima K."/>
            <person name="Yamashita A."/>
            <person name="Shiba T."/>
            <person name="Ogasawara N."/>
            <person name="Hattori M."/>
            <person name="Kuhara S."/>
            <person name="Hayashi H."/>
        </authorList>
    </citation>
    <scope>NUCLEOTIDE SEQUENCE [LARGE SCALE GENOMIC DNA]</scope>
    <source>
        <strain>13 / Type A</strain>
    </source>
</reference>
<organism>
    <name type="scientific">Clostridium perfringens (strain 13 / Type A)</name>
    <dbReference type="NCBI Taxonomy" id="195102"/>
    <lineage>
        <taxon>Bacteria</taxon>
        <taxon>Bacillati</taxon>
        <taxon>Bacillota</taxon>
        <taxon>Clostridia</taxon>
        <taxon>Eubacteriales</taxon>
        <taxon>Clostridiaceae</taxon>
        <taxon>Clostridium</taxon>
    </lineage>
</organism>
<name>MIAB_CLOPE</name>
<protein>
    <recommendedName>
        <fullName evidence="1">tRNA-2-methylthio-N(6)-dimethylallyladenosine synthase</fullName>
        <ecNumber evidence="1">2.8.4.3</ecNumber>
    </recommendedName>
    <alternativeName>
        <fullName evidence="1">(Dimethylallyl)adenosine tRNA methylthiotransferase MiaB</fullName>
    </alternativeName>
    <alternativeName>
        <fullName evidence="1">tRNA-i(6)A37 methylthiotransferase</fullName>
    </alternativeName>
</protein>
<gene>
    <name evidence="1" type="primary">miaB</name>
    <name type="ordered locus">CPE1093</name>
</gene>
<sequence>MTLENNMDKKLFCISTYGCQMNEEDSEKLSGMLKSQGYERTENKEEASIIIFNTCCVRENAENKVFGNLGQLKQLKKKNPNLVIAICGCMMQQVGMADKVLKTFPYVDIIFGTHNAHKFPEYLHRVLQEGVQVKEILNKEEGIVEGLPIDRKSDVKAFVTIMYGCNNFCTYCIVPYVRGRERSRKSEDIIKEIEELVSQGYKEITLLGQNVNSYGKGLEEDIDFAGLLRKVNEVKGLERVRFMTSHPKDLSDDVIMAIKECDKLCEQVHLPVQSGSSRILKEMNRHYDREYYLDLVKKIKSEIPDVTLTTDIIIGFPGETEEDFLDTLSLCEEVGYDSAFTFIYSRRNHTPADKMENQIPDDIKHDRFNRLVEAINKKVVIKNKEYEGKVVEVLVEGPSKNDETKLTGRTRNGKLVNFAGDEKLVGELVNLKIVRAQPFSLIGEIVE</sequence>
<keyword id="KW-0004">4Fe-4S</keyword>
<keyword id="KW-0963">Cytoplasm</keyword>
<keyword id="KW-0408">Iron</keyword>
<keyword id="KW-0411">Iron-sulfur</keyword>
<keyword id="KW-0479">Metal-binding</keyword>
<keyword id="KW-1185">Reference proteome</keyword>
<keyword id="KW-0949">S-adenosyl-L-methionine</keyword>
<keyword id="KW-0808">Transferase</keyword>
<keyword id="KW-0819">tRNA processing</keyword>
<dbReference type="EC" id="2.8.4.3" evidence="1"/>
<dbReference type="EMBL" id="BA000016">
    <property type="protein sequence ID" value="BAB80799.1"/>
    <property type="molecule type" value="Genomic_DNA"/>
</dbReference>
<dbReference type="RefSeq" id="WP_003449335.1">
    <property type="nucleotide sequence ID" value="NC_003366.1"/>
</dbReference>
<dbReference type="SMR" id="Q8XLE9"/>
<dbReference type="STRING" id="195102.gene:10490356"/>
<dbReference type="GeneID" id="93002339"/>
<dbReference type="KEGG" id="cpe:CPE1093"/>
<dbReference type="HOGENOM" id="CLU_018697_2_0_9"/>
<dbReference type="Proteomes" id="UP000000818">
    <property type="component" value="Chromosome"/>
</dbReference>
<dbReference type="GO" id="GO:0005829">
    <property type="term" value="C:cytosol"/>
    <property type="evidence" value="ECO:0007669"/>
    <property type="project" value="TreeGrafter"/>
</dbReference>
<dbReference type="GO" id="GO:0051539">
    <property type="term" value="F:4 iron, 4 sulfur cluster binding"/>
    <property type="evidence" value="ECO:0007669"/>
    <property type="project" value="UniProtKB-UniRule"/>
</dbReference>
<dbReference type="GO" id="GO:0046872">
    <property type="term" value="F:metal ion binding"/>
    <property type="evidence" value="ECO:0007669"/>
    <property type="project" value="UniProtKB-KW"/>
</dbReference>
<dbReference type="GO" id="GO:0035597">
    <property type="term" value="F:N6-isopentenyladenosine methylthiotransferase activity"/>
    <property type="evidence" value="ECO:0007669"/>
    <property type="project" value="TreeGrafter"/>
</dbReference>
<dbReference type="CDD" id="cd01335">
    <property type="entry name" value="Radical_SAM"/>
    <property type="match status" value="1"/>
</dbReference>
<dbReference type="FunFam" id="3.40.50.12160:FF:000006">
    <property type="entry name" value="tRNA-2-methylthio-N(6)-dimethylallyladenosine synthase"/>
    <property type="match status" value="1"/>
</dbReference>
<dbReference type="FunFam" id="3.80.30.20:FF:000001">
    <property type="entry name" value="tRNA-2-methylthio-N(6)-dimethylallyladenosine synthase 2"/>
    <property type="match status" value="1"/>
</dbReference>
<dbReference type="Gene3D" id="3.40.50.12160">
    <property type="entry name" value="Methylthiotransferase, N-terminal domain"/>
    <property type="match status" value="1"/>
</dbReference>
<dbReference type="Gene3D" id="3.80.30.20">
    <property type="entry name" value="tm_1862 like domain"/>
    <property type="match status" value="1"/>
</dbReference>
<dbReference type="HAMAP" id="MF_01864">
    <property type="entry name" value="tRNA_metthiotr_MiaB"/>
    <property type="match status" value="1"/>
</dbReference>
<dbReference type="InterPro" id="IPR006638">
    <property type="entry name" value="Elp3/MiaA/NifB-like_rSAM"/>
</dbReference>
<dbReference type="InterPro" id="IPR005839">
    <property type="entry name" value="Methylthiotransferase"/>
</dbReference>
<dbReference type="InterPro" id="IPR020612">
    <property type="entry name" value="Methylthiotransferase_CS"/>
</dbReference>
<dbReference type="InterPro" id="IPR013848">
    <property type="entry name" value="Methylthiotransferase_N"/>
</dbReference>
<dbReference type="InterPro" id="IPR038135">
    <property type="entry name" value="Methylthiotransferase_N_sf"/>
</dbReference>
<dbReference type="InterPro" id="IPR006463">
    <property type="entry name" value="MiaB_methiolase"/>
</dbReference>
<dbReference type="InterPro" id="IPR007197">
    <property type="entry name" value="rSAM"/>
</dbReference>
<dbReference type="InterPro" id="IPR023404">
    <property type="entry name" value="rSAM_horseshoe"/>
</dbReference>
<dbReference type="InterPro" id="IPR002792">
    <property type="entry name" value="TRAM_dom"/>
</dbReference>
<dbReference type="NCBIfam" id="TIGR01574">
    <property type="entry name" value="miaB-methiolase"/>
    <property type="match status" value="1"/>
</dbReference>
<dbReference type="NCBIfam" id="TIGR00089">
    <property type="entry name" value="MiaB/RimO family radical SAM methylthiotransferase"/>
    <property type="match status" value="1"/>
</dbReference>
<dbReference type="PANTHER" id="PTHR43020">
    <property type="entry name" value="CDK5 REGULATORY SUBUNIT-ASSOCIATED PROTEIN 1"/>
    <property type="match status" value="1"/>
</dbReference>
<dbReference type="PANTHER" id="PTHR43020:SF2">
    <property type="entry name" value="MITOCHONDRIAL TRNA METHYLTHIOTRANSFERASE CDK5RAP1"/>
    <property type="match status" value="1"/>
</dbReference>
<dbReference type="Pfam" id="PF04055">
    <property type="entry name" value="Radical_SAM"/>
    <property type="match status" value="1"/>
</dbReference>
<dbReference type="Pfam" id="PF01938">
    <property type="entry name" value="TRAM"/>
    <property type="match status" value="1"/>
</dbReference>
<dbReference type="Pfam" id="PF00919">
    <property type="entry name" value="UPF0004"/>
    <property type="match status" value="1"/>
</dbReference>
<dbReference type="SFLD" id="SFLDF00273">
    <property type="entry name" value="(dimethylallyl)adenosine_tRNA"/>
    <property type="match status" value="1"/>
</dbReference>
<dbReference type="SFLD" id="SFLDG01082">
    <property type="entry name" value="B12-binding_domain_containing"/>
    <property type="match status" value="1"/>
</dbReference>
<dbReference type="SFLD" id="SFLDS00029">
    <property type="entry name" value="Radical_SAM"/>
    <property type="match status" value="1"/>
</dbReference>
<dbReference type="SMART" id="SM00729">
    <property type="entry name" value="Elp3"/>
    <property type="match status" value="1"/>
</dbReference>
<dbReference type="SUPFAM" id="SSF102114">
    <property type="entry name" value="Radical SAM enzymes"/>
    <property type="match status" value="1"/>
</dbReference>
<dbReference type="PROSITE" id="PS51449">
    <property type="entry name" value="MTTASE_N"/>
    <property type="match status" value="1"/>
</dbReference>
<dbReference type="PROSITE" id="PS01278">
    <property type="entry name" value="MTTASE_RADICAL"/>
    <property type="match status" value="1"/>
</dbReference>
<dbReference type="PROSITE" id="PS51918">
    <property type="entry name" value="RADICAL_SAM"/>
    <property type="match status" value="1"/>
</dbReference>
<dbReference type="PROSITE" id="PS50926">
    <property type="entry name" value="TRAM"/>
    <property type="match status" value="1"/>
</dbReference>